<protein>
    <recommendedName>
        <fullName evidence="5">Chlorophenol O-methyltransferase</fullName>
        <shortName evidence="5">COMPT</shortName>
        <ecNumber evidence="4">2.1.1.136</ecNumber>
    </recommendedName>
</protein>
<accession>D3H5H5</accession>
<comment type="function">
    <text evidence="3 4">Chlorophenol O-methyltransferase that methylates chlorophenols into chloroanisoles which are thought to be responsible for cork taint of wines (PubMed:12957890, PubMed:20144725). The only single chlorophenol (CP) methylated is 2-CP; neither 3-CP nor 4-CP are effective substrates (PubMed:12957890). Within the dichlorophenols (DCPs), 2,4-DCP supports the highest rate of O-methylation, and the activity decreases in the following order: 2,3-DCP, 2,5-DCP, 2,6-DCP, and 3,4-DCP (PubMed:12957890). Within the trichlorophenol (TCP) group, the maximal activity is observed with 2,3,4-TCP, whereas there is increasingly reduced activity with 2,4,5-TCP, 2,4,6-TCP, and 2,3,6-TCP (PubMed:12957890). The only tetrachlorophenol (TeCP) that is methylated is 2,3,4,5-TeCP, since no activity can be detected with 2,3,4,6-TeCP and 2,3,5,6-TeCP (PubMed:12957890). Is also able to methylate other halogenated phenols containing fluoro or bromo substituents, whereas other hydroxylated compounds, such as hydroxylated benzoic acids, hydroxybenzaldehydes, phenol, 2-metoxyphenol, and dihydroxybenzene, were not methylated (PubMed:12957890).</text>
</comment>
<comment type="catalytic activity">
    <reaction evidence="3">
        <text>2,4,6-trichlorophenol + S-adenosyl-L-methionine = 2,4,6-trichloroanisole + S-adenosyl-L-homocysteine</text>
        <dbReference type="Rhea" id="RHEA:18909"/>
        <dbReference type="ChEBI" id="CHEBI:19333"/>
        <dbReference type="ChEBI" id="CHEBI:57856"/>
        <dbReference type="ChEBI" id="CHEBI:59789"/>
        <dbReference type="ChEBI" id="CHEBI:140426"/>
        <dbReference type="EC" id="2.1.1.136"/>
    </reaction>
</comment>
<comment type="activity regulation">
    <text evidence="3">S-adenosyl-L-homocysteine acts as a competitive inhibitor (PubMed:12957890). Also strongly inhibited by low concentrations of several metal ions, such as Cu(2+), Hg(2+), Zn(2+), and Ag(+), and to a lesser extent by p-chloromercuribenzoic acid, but it is not significantly affected by several thiols or other thiol reagents (PubMed:12957890).</text>
</comment>
<comment type="biophysicochemical properties">
    <kinetics>
        <KM evidence="3">136 uM for 2,4,6-trichlorophenol (2,4,6-TCP)</KM>
        <KM evidence="3">284 uM for S-adenosyl-L-methionine (SAM)</KM>
    </kinetics>
    <phDependence>
        <text evidence="3">Optimum pH is 8.2-8.5.</text>
    </phDependence>
    <temperatureDependence>
        <text evidence="3">Optimum temperature is 28 degrees Celsius.</text>
    </temperatureDependence>
</comment>
<comment type="induction">
    <text evidence="3 4">Expression is specifically induced by several chlorophenols, especially if they contained three or more chlorine atoms in their structures, such as 2,4,6-trichlorophenol (PubMed:12957890, PubMed:20144725).</text>
</comment>
<comment type="biotechnology">
    <text evidence="7">Chloroanisoles such as 2,4,6-trichloroanisole (TCA) are known compounds which are usually associated with wine faults (PubMed:28842039). They belong to the family of haloanisoles which are key substances responsible for cork taint in wines (PubMed:28842039).</text>
</comment>
<comment type="similarity">
    <text evidence="8">Belongs to the class I-like SAM-binding methyltransferase superfamily. Cation-independent O-methyltransferase family.</text>
</comment>
<comment type="online information" name="Protein Spotlight">
    <link uri="https://www.proteinspotlight.org/back_issues/204/"/>
    <text>Tainted - Issue 204 of June 2018</text>
</comment>
<evidence type="ECO:0000255" key="1">
    <source>
        <dbReference type="PROSITE-ProRule" id="PRU01020"/>
    </source>
</evidence>
<evidence type="ECO:0000256" key="2">
    <source>
        <dbReference type="SAM" id="MobiDB-lite"/>
    </source>
</evidence>
<evidence type="ECO:0000269" key="3">
    <source>
    </source>
</evidence>
<evidence type="ECO:0000269" key="4">
    <source>
    </source>
</evidence>
<evidence type="ECO:0000303" key="5">
    <source>
    </source>
</evidence>
<evidence type="ECO:0000303" key="6">
    <source>
    </source>
</evidence>
<evidence type="ECO:0000303" key="7">
    <source>
    </source>
</evidence>
<evidence type="ECO:0000305" key="8"/>
<reference key="1">
    <citation type="journal article" date="2010" name="Fungal Genet. Biol.">
        <title>Characterization of a novel 2,4,6-trichlorophenol-inducible gene encoding chlorophenol O-methyltransferase from Trichoderma longibrachiatum responsible for the formation of chloroanisoles and detoxification of chlorophenols.</title>
        <authorList>
            <person name="Feltrer R."/>
            <person name="Alvarez-Rodriguez M.L."/>
            <person name="Barreiro C."/>
            <person name="Godio R.P."/>
            <person name="Coque J.J."/>
        </authorList>
    </citation>
    <scope>NUCLEOTIDE SEQUENCE [GENOMIC DNA]</scope>
    <scope>INDUCTION</scope>
    <scope>FUNCTION</scope>
    <source>
        <strain>CECT 20431</strain>
    </source>
</reference>
<reference key="2">
    <citation type="journal article" date="2003" name="Appl. Environ. Microbiol.">
        <title>Characterization of an inducible chlorophenol O-methyltransferase from Trichoderma longibrachiatum involved in the formation of chloroanisoles and determination of its role in cork taint of wines.</title>
        <authorList>
            <person name="Coque J.J."/>
            <person name="Alvarez-Rodriguez M.L."/>
            <person name="Larriba G."/>
        </authorList>
    </citation>
    <scope>FUNCTION</scope>
    <scope>CATALYTIC ACTIVITY</scope>
    <scope>BIOPHYSICOCHEMICAL PROPERTIES</scope>
    <scope>ACTIVITY REGULATION</scope>
    <scope>INDUCTION</scope>
</reference>
<reference key="3">
    <citation type="journal article" date="2017" name="Talanta">
        <title>'Cork taint' responsible compounds. Determination of haloanisoles and halophenols in cork matrix: A review.</title>
        <authorList>
            <person name="Tarasov A."/>
            <person name="Rauhut D."/>
            <person name="Jung R."/>
        </authorList>
    </citation>
    <scope>REVIEW ON BIOTECHNOLOGY</scope>
</reference>
<dbReference type="EC" id="2.1.1.136" evidence="4"/>
<dbReference type="EMBL" id="FN554867">
    <property type="protein sequence ID" value="CBG37723.1"/>
    <property type="molecule type" value="Genomic_DNA"/>
</dbReference>
<dbReference type="SMR" id="D3H5H5"/>
<dbReference type="GO" id="GO:0030790">
    <property type="term" value="F:chlorophenol O-methyltransferase activity"/>
    <property type="evidence" value="ECO:0007669"/>
    <property type="project" value="UniProtKB-EC"/>
</dbReference>
<dbReference type="GO" id="GO:0008171">
    <property type="term" value="F:O-methyltransferase activity"/>
    <property type="evidence" value="ECO:0007669"/>
    <property type="project" value="InterPro"/>
</dbReference>
<dbReference type="GO" id="GO:0032259">
    <property type="term" value="P:methylation"/>
    <property type="evidence" value="ECO:0007669"/>
    <property type="project" value="UniProtKB-KW"/>
</dbReference>
<dbReference type="GO" id="GO:0044550">
    <property type="term" value="P:secondary metabolite biosynthetic process"/>
    <property type="evidence" value="ECO:0007669"/>
    <property type="project" value="UniProtKB-ARBA"/>
</dbReference>
<dbReference type="Gene3D" id="3.40.50.150">
    <property type="entry name" value="Vaccinia Virus protein VP39"/>
    <property type="match status" value="1"/>
</dbReference>
<dbReference type="Gene3D" id="1.10.10.10">
    <property type="entry name" value="Winged helix-like DNA-binding domain superfamily/Winged helix DNA-binding domain"/>
    <property type="match status" value="1"/>
</dbReference>
<dbReference type="InterPro" id="IPR016461">
    <property type="entry name" value="COMT-like"/>
</dbReference>
<dbReference type="InterPro" id="IPR001077">
    <property type="entry name" value="O_MeTrfase_dom"/>
</dbReference>
<dbReference type="InterPro" id="IPR029063">
    <property type="entry name" value="SAM-dependent_MTases_sf"/>
</dbReference>
<dbReference type="InterPro" id="IPR036388">
    <property type="entry name" value="WH-like_DNA-bd_sf"/>
</dbReference>
<dbReference type="InterPro" id="IPR036390">
    <property type="entry name" value="WH_DNA-bd_sf"/>
</dbReference>
<dbReference type="PANTHER" id="PTHR43712:SF16">
    <property type="entry name" value="O-METHYLTRANSFERASE ELCB"/>
    <property type="match status" value="1"/>
</dbReference>
<dbReference type="PANTHER" id="PTHR43712">
    <property type="entry name" value="PUTATIVE (AFU_ORTHOLOGUE AFUA_4G14580)-RELATED"/>
    <property type="match status" value="1"/>
</dbReference>
<dbReference type="Pfam" id="PF00891">
    <property type="entry name" value="Methyltransf_2"/>
    <property type="match status" value="1"/>
</dbReference>
<dbReference type="SUPFAM" id="SSF53335">
    <property type="entry name" value="S-adenosyl-L-methionine-dependent methyltransferases"/>
    <property type="match status" value="1"/>
</dbReference>
<dbReference type="SUPFAM" id="SSF46785">
    <property type="entry name" value="Winged helix' DNA-binding domain"/>
    <property type="match status" value="1"/>
</dbReference>
<dbReference type="PROSITE" id="PS51683">
    <property type="entry name" value="SAM_OMT_II"/>
    <property type="match status" value="1"/>
</dbReference>
<gene>
    <name evidence="6" type="primary">cmt1</name>
</gene>
<feature type="chain" id="PRO_0000444106" description="Chlorophenol O-methyltransferase">
    <location>
        <begin position="1"/>
        <end position="467"/>
    </location>
</feature>
<feature type="region of interest" description="Disordered" evidence="2">
    <location>
        <begin position="1"/>
        <end position="41"/>
    </location>
</feature>
<feature type="compositionally biased region" description="Polar residues" evidence="2">
    <location>
        <begin position="8"/>
        <end position="21"/>
    </location>
</feature>
<feature type="compositionally biased region" description="Polar residues" evidence="2">
    <location>
        <begin position="31"/>
        <end position="41"/>
    </location>
</feature>
<feature type="active site" description="Proton acceptor" evidence="1">
    <location>
        <position position="368"/>
    </location>
</feature>
<feature type="binding site" evidence="1">
    <location>
        <position position="320"/>
    </location>
    <ligand>
        <name>S-adenosyl-L-methionine</name>
        <dbReference type="ChEBI" id="CHEBI:59789"/>
    </ligand>
</feature>
<keyword id="KW-0489">Methyltransferase</keyword>
<keyword id="KW-0949">S-adenosyl-L-methionine</keyword>
<keyword id="KW-0808">Transferase</keyword>
<organism>
    <name type="scientific">Trichoderma longibrachiatum</name>
    <dbReference type="NCBI Taxonomy" id="5548"/>
    <lineage>
        <taxon>Eukaryota</taxon>
        <taxon>Fungi</taxon>
        <taxon>Dikarya</taxon>
        <taxon>Ascomycota</taxon>
        <taxon>Pezizomycotina</taxon>
        <taxon>Sordariomycetes</taxon>
        <taxon>Hypocreomycetidae</taxon>
        <taxon>Hypocreales</taxon>
        <taxon>Hypocreaceae</taxon>
        <taxon>Trichoderma</taxon>
    </lineage>
</organism>
<proteinExistence type="evidence at protein level"/>
<name>CMT1_TRILO</name>
<sequence length="467" mass="52461">MAELRAPSSLSTERNGSASNTDVDKQKLNHLYQNGNKKTGSAESRMLVLAETIRAETQKLHAYLESNGIAQPDLSVDAPDDFPPLPDEIQESRQKIFLASRELTDIVRGPRETVRYAVWSYLDTLSLQLINSYGIAKLVPLDAPIKLTELQSKTPLEPVHLARALRHAMTNNIFREPSPGYIAHTSSSRILAQDPALQAWVGFNSEDAFPAAGHVLQALKDHPEAISSTHAGFNYAFNTVGQEPMFATLGKDLARAKRFAQAMHSFSHGEGYKVSYFVDNYDLSEVDKRGGTFVDIGGSHGFVSVELAKRWKDMKFIVEDLPKTIESAPQPISDDKTVADRISLQAHDFFQEQPVKGADVYFFRWIIHNHAKPYAVSILRNLIPALKPGARVVINDYCIREAGSENAWDEKLLRNMDMIMGALLNAQEREEWEFRELFEAADPRFKFKGVQRVENCKMSVIEAVWDE</sequence>